<proteinExistence type="inferred from homology"/>
<feature type="chain" id="PRO_1000095577" description="Histidine--tRNA ligase">
    <location>
        <begin position="1"/>
        <end position="429"/>
    </location>
</feature>
<sequence length="429" mass="48058">MPQYQAVKGTRDIFPEEAARWKYVEGVVHAIASLYGFSEIRTPVFEYTELFQRGIGSTTDIVGKEMFSFLPDPKGRSLTLRPEMTAGVMRAALQNNLLSSAPVQKLYYIGELFRKERPQAGRQRQFSQFGAELLGVSSPAAVAEVITLMMQLFASLGLRSLKLRINSLGDTEDRLRYREALQLYFTPFHELLDDASKERLEKNPLRILDTKNPALQELVAGAPRLYDYLKDASLQDFEKVLFYLEERDIAYEIDYRLVRGLDYYCNTAFEVTSSELGAQDAIGGGGRYDGLARELGSSVDVPASGFAVGMERLLITMEKQGLFATLAPQGPLVYVIVQQQDLADNALQIVWRLRKAGIKTEVDLAARSMKAQMREANKIKAAYALFIGTTEETTGLYALKNLETSEQITLTLEAVLELLREQAVGEQLD</sequence>
<gene>
    <name evidence="1" type="primary">hisS</name>
    <name type="ordered locus">Ppha_0393</name>
</gene>
<comment type="catalytic activity">
    <reaction evidence="1">
        <text>tRNA(His) + L-histidine + ATP = L-histidyl-tRNA(His) + AMP + diphosphate + H(+)</text>
        <dbReference type="Rhea" id="RHEA:17313"/>
        <dbReference type="Rhea" id="RHEA-COMP:9665"/>
        <dbReference type="Rhea" id="RHEA-COMP:9689"/>
        <dbReference type="ChEBI" id="CHEBI:15378"/>
        <dbReference type="ChEBI" id="CHEBI:30616"/>
        <dbReference type="ChEBI" id="CHEBI:33019"/>
        <dbReference type="ChEBI" id="CHEBI:57595"/>
        <dbReference type="ChEBI" id="CHEBI:78442"/>
        <dbReference type="ChEBI" id="CHEBI:78527"/>
        <dbReference type="ChEBI" id="CHEBI:456215"/>
        <dbReference type="EC" id="6.1.1.21"/>
    </reaction>
</comment>
<comment type="subunit">
    <text evidence="1">Homodimer.</text>
</comment>
<comment type="subcellular location">
    <subcellularLocation>
        <location evidence="1">Cytoplasm</location>
    </subcellularLocation>
</comment>
<comment type="similarity">
    <text evidence="1">Belongs to the class-II aminoacyl-tRNA synthetase family.</text>
</comment>
<organism>
    <name type="scientific">Pelodictyon phaeoclathratiforme (strain DSM 5477 / BU-1)</name>
    <dbReference type="NCBI Taxonomy" id="324925"/>
    <lineage>
        <taxon>Bacteria</taxon>
        <taxon>Pseudomonadati</taxon>
        <taxon>Chlorobiota</taxon>
        <taxon>Chlorobiia</taxon>
        <taxon>Chlorobiales</taxon>
        <taxon>Chlorobiaceae</taxon>
        <taxon>Chlorobium/Pelodictyon group</taxon>
        <taxon>Pelodictyon</taxon>
    </lineage>
</organism>
<accession>B4SCE2</accession>
<evidence type="ECO:0000255" key="1">
    <source>
        <dbReference type="HAMAP-Rule" id="MF_00127"/>
    </source>
</evidence>
<dbReference type="EC" id="6.1.1.21" evidence="1"/>
<dbReference type="EMBL" id="CP001110">
    <property type="protein sequence ID" value="ACF42722.1"/>
    <property type="molecule type" value="Genomic_DNA"/>
</dbReference>
<dbReference type="RefSeq" id="WP_012507217.1">
    <property type="nucleotide sequence ID" value="NC_011060.1"/>
</dbReference>
<dbReference type="SMR" id="B4SCE2"/>
<dbReference type="STRING" id="324925.Ppha_0393"/>
<dbReference type="KEGG" id="pph:Ppha_0393"/>
<dbReference type="eggNOG" id="COG0124">
    <property type="taxonomic scope" value="Bacteria"/>
</dbReference>
<dbReference type="HOGENOM" id="CLU_025113_1_1_10"/>
<dbReference type="OrthoDB" id="9800814at2"/>
<dbReference type="Proteomes" id="UP000002724">
    <property type="component" value="Chromosome"/>
</dbReference>
<dbReference type="GO" id="GO:0005737">
    <property type="term" value="C:cytoplasm"/>
    <property type="evidence" value="ECO:0007669"/>
    <property type="project" value="UniProtKB-SubCell"/>
</dbReference>
<dbReference type="GO" id="GO:0005524">
    <property type="term" value="F:ATP binding"/>
    <property type="evidence" value="ECO:0007669"/>
    <property type="project" value="UniProtKB-UniRule"/>
</dbReference>
<dbReference type="GO" id="GO:0004821">
    <property type="term" value="F:histidine-tRNA ligase activity"/>
    <property type="evidence" value="ECO:0007669"/>
    <property type="project" value="UniProtKB-UniRule"/>
</dbReference>
<dbReference type="GO" id="GO:0006427">
    <property type="term" value="P:histidyl-tRNA aminoacylation"/>
    <property type="evidence" value="ECO:0007669"/>
    <property type="project" value="UniProtKB-UniRule"/>
</dbReference>
<dbReference type="CDD" id="cd00773">
    <property type="entry name" value="HisRS-like_core"/>
    <property type="match status" value="1"/>
</dbReference>
<dbReference type="CDD" id="cd00859">
    <property type="entry name" value="HisRS_anticodon"/>
    <property type="match status" value="1"/>
</dbReference>
<dbReference type="Gene3D" id="3.40.50.800">
    <property type="entry name" value="Anticodon-binding domain"/>
    <property type="match status" value="1"/>
</dbReference>
<dbReference type="Gene3D" id="3.30.930.10">
    <property type="entry name" value="Bira Bifunctional Protein, Domain 2"/>
    <property type="match status" value="1"/>
</dbReference>
<dbReference type="HAMAP" id="MF_00127">
    <property type="entry name" value="His_tRNA_synth"/>
    <property type="match status" value="1"/>
</dbReference>
<dbReference type="InterPro" id="IPR006195">
    <property type="entry name" value="aa-tRNA-synth_II"/>
</dbReference>
<dbReference type="InterPro" id="IPR045864">
    <property type="entry name" value="aa-tRNA-synth_II/BPL/LPL"/>
</dbReference>
<dbReference type="InterPro" id="IPR004154">
    <property type="entry name" value="Anticodon-bd"/>
</dbReference>
<dbReference type="InterPro" id="IPR036621">
    <property type="entry name" value="Anticodon-bd_dom_sf"/>
</dbReference>
<dbReference type="InterPro" id="IPR015807">
    <property type="entry name" value="His-tRNA-ligase"/>
</dbReference>
<dbReference type="InterPro" id="IPR041715">
    <property type="entry name" value="HisRS-like_core"/>
</dbReference>
<dbReference type="InterPro" id="IPR004516">
    <property type="entry name" value="HisRS/HisZ"/>
</dbReference>
<dbReference type="InterPro" id="IPR033656">
    <property type="entry name" value="HisRS_anticodon"/>
</dbReference>
<dbReference type="NCBIfam" id="TIGR00442">
    <property type="entry name" value="hisS"/>
    <property type="match status" value="1"/>
</dbReference>
<dbReference type="PANTHER" id="PTHR43707:SF1">
    <property type="entry name" value="HISTIDINE--TRNA LIGASE, MITOCHONDRIAL-RELATED"/>
    <property type="match status" value="1"/>
</dbReference>
<dbReference type="PANTHER" id="PTHR43707">
    <property type="entry name" value="HISTIDYL-TRNA SYNTHETASE"/>
    <property type="match status" value="1"/>
</dbReference>
<dbReference type="Pfam" id="PF03129">
    <property type="entry name" value="HGTP_anticodon"/>
    <property type="match status" value="1"/>
</dbReference>
<dbReference type="Pfam" id="PF13393">
    <property type="entry name" value="tRNA-synt_His"/>
    <property type="match status" value="1"/>
</dbReference>
<dbReference type="PIRSF" id="PIRSF001549">
    <property type="entry name" value="His-tRNA_synth"/>
    <property type="match status" value="1"/>
</dbReference>
<dbReference type="SUPFAM" id="SSF52954">
    <property type="entry name" value="Class II aaRS ABD-related"/>
    <property type="match status" value="1"/>
</dbReference>
<dbReference type="SUPFAM" id="SSF55681">
    <property type="entry name" value="Class II aaRS and biotin synthetases"/>
    <property type="match status" value="1"/>
</dbReference>
<dbReference type="PROSITE" id="PS50862">
    <property type="entry name" value="AA_TRNA_LIGASE_II"/>
    <property type="match status" value="1"/>
</dbReference>
<keyword id="KW-0030">Aminoacyl-tRNA synthetase</keyword>
<keyword id="KW-0067">ATP-binding</keyword>
<keyword id="KW-0963">Cytoplasm</keyword>
<keyword id="KW-0436">Ligase</keyword>
<keyword id="KW-0547">Nucleotide-binding</keyword>
<keyword id="KW-0648">Protein biosynthesis</keyword>
<keyword id="KW-1185">Reference proteome</keyword>
<protein>
    <recommendedName>
        <fullName evidence="1">Histidine--tRNA ligase</fullName>
        <ecNumber evidence="1">6.1.1.21</ecNumber>
    </recommendedName>
    <alternativeName>
        <fullName evidence="1">Histidyl-tRNA synthetase</fullName>
        <shortName evidence="1">HisRS</shortName>
    </alternativeName>
</protein>
<reference key="1">
    <citation type="submission" date="2008-06" db="EMBL/GenBank/DDBJ databases">
        <title>Complete sequence of Pelodictyon phaeoclathratiforme BU-1.</title>
        <authorList>
            <consortium name="US DOE Joint Genome Institute"/>
            <person name="Lucas S."/>
            <person name="Copeland A."/>
            <person name="Lapidus A."/>
            <person name="Glavina del Rio T."/>
            <person name="Dalin E."/>
            <person name="Tice H."/>
            <person name="Bruce D."/>
            <person name="Goodwin L."/>
            <person name="Pitluck S."/>
            <person name="Schmutz J."/>
            <person name="Larimer F."/>
            <person name="Land M."/>
            <person name="Hauser L."/>
            <person name="Kyrpides N."/>
            <person name="Mikhailova N."/>
            <person name="Liu Z."/>
            <person name="Li T."/>
            <person name="Zhao F."/>
            <person name="Overmann J."/>
            <person name="Bryant D.A."/>
            <person name="Richardson P."/>
        </authorList>
    </citation>
    <scope>NUCLEOTIDE SEQUENCE [LARGE SCALE GENOMIC DNA]</scope>
    <source>
        <strain>DSM 5477 / BU-1</strain>
    </source>
</reference>
<name>SYH_PELPB</name>